<dbReference type="EC" id="1.14.13.196" evidence="6"/>
<dbReference type="EMBL" id="KB445795">
    <property type="protein sequence ID" value="EMD38274.1"/>
    <property type="molecule type" value="Genomic_DNA"/>
</dbReference>
<dbReference type="SMR" id="M2PP75"/>
<dbReference type="STRING" id="914234.M2PP75"/>
<dbReference type="HOGENOM" id="CLU_020931_2_0_1"/>
<dbReference type="OrthoDB" id="3519933at2759"/>
<dbReference type="Proteomes" id="UP000016930">
    <property type="component" value="Unassembled WGS sequence"/>
</dbReference>
<dbReference type="GO" id="GO:0031172">
    <property type="term" value="F:ornithine N5-monooxygenase activity"/>
    <property type="evidence" value="ECO:0007669"/>
    <property type="project" value="RHEA"/>
</dbReference>
<dbReference type="GO" id="GO:0009058">
    <property type="term" value="P:biosynthetic process"/>
    <property type="evidence" value="ECO:0007669"/>
    <property type="project" value="UniProtKB-ARBA"/>
</dbReference>
<dbReference type="GO" id="GO:0006879">
    <property type="term" value="P:intracellular iron ion homeostasis"/>
    <property type="evidence" value="ECO:0007669"/>
    <property type="project" value="TreeGrafter"/>
</dbReference>
<dbReference type="Gene3D" id="3.50.50.60">
    <property type="entry name" value="FAD/NAD(P)-binding domain"/>
    <property type="match status" value="1"/>
</dbReference>
<dbReference type="InterPro" id="IPR036188">
    <property type="entry name" value="FAD/NAD-bd_sf"/>
</dbReference>
<dbReference type="InterPro" id="IPR025700">
    <property type="entry name" value="Lys/Orn_oxygenase"/>
</dbReference>
<dbReference type="PANTHER" id="PTHR42802:SF1">
    <property type="entry name" value="L-ORNITHINE N(5)-MONOOXYGENASE"/>
    <property type="match status" value="1"/>
</dbReference>
<dbReference type="PANTHER" id="PTHR42802">
    <property type="entry name" value="MONOOXYGENASE"/>
    <property type="match status" value="1"/>
</dbReference>
<dbReference type="Pfam" id="PF13434">
    <property type="entry name" value="Lys_Orn_oxgnase"/>
    <property type="match status" value="1"/>
</dbReference>
<dbReference type="PRINTS" id="PR00368">
    <property type="entry name" value="FADPNR"/>
</dbReference>
<dbReference type="SUPFAM" id="SSF51905">
    <property type="entry name" value="FAD/NAD(P)-binding domain"/>
    <property type="match status" value="1"/>
</dbReference>
<organism>
    <name type="scientific">Ceriporiopsis subvermispora (strain B)</name>
    <name type="common">White-rot fungus</name>
    <name type="synonym">Gelatoporia subvermispora</name>
    <dbReference type="NCBI Taxonomy" id="914234"/>
    <lineage>
        <taxon>Eukaryota</taxon>
        <taxon>Fungi</taxon>
        <taxon>Dikarya</taxon>
        <taxon>Basidiomycota</taxon>
        <taxon>Agaricomycotina</taxon>
        <taxon>Agaricomycetes</taxon>
        <taxon>Polyporales</taxon>
        <taxon>Gelatoporiaceae</taxon>
        <taxon>Gelatoporia</taxon>
    </lineage>
</organism>
<gene>
    <name type="primary">SMO1</name>
    <name type="ORF">CERSUDRAFT_113443</name>
</gene>
<feature type="chain" id="PRO_0000444313" description="L-ornithine N(5)-monooxygenase">
    <location>
        <begin position="1"/>
        <end position="541"/>
    </location>
</feature>
<feature type="region of interest" description="Disordered" evidence="2">
    <location>
        <begin position="430"/>
        <end position="474"/>
    </location>
</feature>
<feature type="binding site" evidence="1">
    <location>
        <begin position="50"/>
        <end position="58"/>
    </location>
    <ligand>
        <name>FAD</name>
        <dbReference type="ChEBI" id="CHEBI:57692"/>
    </ligand>
</feature>
<feature type="binding site" evidence="1">
    <location>
        <position position="69"/>
    </location>
    <ligand>
        <name>FAD</name>
        <dbReference type="ChEBI" id="CHEBI:57692"/>
    </ligand>
</feature>
<feature type="binding site" evidence="1">
    <location>
        <position position="74"/>
    </location>
    <ligand>
        <name>substrate</name>
    </ligand>
</feature>
<feature type="binding site" evidence="1">
    <location>
        <begin position="223"/>
        <end position="226"/>
    </location>
    <ligand>
        <name>NADP(+)</name>
        <dbReference type="ChEBI" id="CHEBI:58349"/>
    </ligand>
</feature>
<feature type="binding site" evidence="1">
    <location>
        <begin position="269"/>
        <end position="272"/>
    </location>
    <ligand>
        <name>substrate</name>
    </ligand>
</feature>
<feature type="binding site" evidence="1">
    <location>
        <begin position="300"/>
        <end position="302"/>
    </location>
    <ligand>
        <name>NADP(+)</name>
        <dbReference type="ChEBI" id="CHEBI:58349"/>
    </ligand>
</feature>
<feature type="binding site" evidence="1">
    <location>
        <position position="300"/>
    </location>
    <ligand>
        <name>substrate</name>
    </ligand>
</feature>
<feature type="binding site" evidence="1">
    <location>
        <begin position="520"/>
        <end position="522"/>
    </location>
    <ligand>
        <name>FAD</name>
        <dbReference type="ChEBI" id="CHEBI:57692"/>
    </ligand>
</feature>
<feature type="binding site" evidence="1">
    <location>
        <position position="523"/>
    </location>
    <ligand>
        <name>substrate</name>
    </ligand>
</feature>
<protein>
    <recommendedName>
        <fullName evidence="4">L-ornithine N(5)-monooxygenase</fullName>
        <ecNumber evidence="6">1.14.13.196</ecNumber>
    </recommendedName>
    <alternativeName>
        <fullName evidence="4">Basidioferrin biosynthesis protein SMO1</fullName>
    </alternativeName>
    <alternativeName>
        <fullName evidence="5">L-ornithine N(5)-oxygenase</fullName>
    </alternativeName>
    <alternativeName>
        <fullName evidence="4">Siderophore biosynthesis protein SMO1</fullName>
    </alternativeName>
</protein>
<proteinExistence type="evidence at transcript level"/>
<reference key="1">
    <citation type="journal article" date="2012" name="Proc. Natl. Acad. Sci. U.S.A.">
        <title>Comparative genomics of Ceriporiopsis subvermispora and Phanerochaete chrysosporium provide insight into selective ligninolysis.</title>
        <authorList>
            <person name="Fernandez-Fueyo E."/>
            <person name="Ruiz-Duenas F.J."/>
            <person name="Ferreira P."/>
            <person name="Floudas D."/>
            <person name="Hibbett D.S."/>
            <person name="Canessa P."/>
            <person name="Larrondo L.F."/>
            <person name="James T.Y."/>
            <person name="Seelenfreund D."/>
            <person name="Lobos S."/>
            <person name="Polanco R."/>
            <person name="Tello M."/>
            <person name="Honda Y."/>
            <person name="Watanabe T."/>
            <person name="Watanabe T."/>
            <person name="Ryu J.S."/>
            <person name="Kubicek C.P."/>
            <person name="Schmoll M."/>
            <person name="Gaskell J."/>
            <person name="Hammel K.E."/>
            <person name="St John F.J."/>
            <person name="Vanden Wymelenberg A."/>
            <person name="Sabat G."/>
            <person name="Splinter BonDurant S."/>
            <person name="Syed K."/>
            <person name="Yadav J.S."/>
            <person name="Doddapaneni H."/>
            <person name="Subramanian V."/>
            <person name="Lavin J.L."/>
            <person name="Oguiza J.A."/>
            <person name="Perez G."/>
            <person name="Pisabarro A.G."/>
            <person name="Ramirez L."/>
            <person name="Santoyo F."/>
            <person name="Master E."/>
            <person name="Coutinho P.M."/>
            <person name="Henrissat B."/>
            <person name="Lombard V."/>
            <person name="Magnuson J.K."/>
            <person name="Kuees U."/>
            <person name="Hori C."/>
            <person name="Igarashi K."/>
            <person name="Samejima M."/>
            <person name="Held B.W."/>
            <person name="Barry K.W."/>
            <person name="LaButti K.M."/>
            <person name="Lapidus A."/>
            <person name="Lindquist E.A."/>
            <person name="Lucas S.M."/>
            <person name="Riley R."/>
            <person name="Salamov A.A."/>
            <person name="Hoffmeister D."/>
            <person name="Schwenk D."/>
            <person name="Hadar Y."/>
            <person name="Yarden O."/>
            <person name="de Vries R.P."/>
            <person name="Wiebenga A."/>
            <person name="Stenlid J."/>
            <person name="Eastwood D."/>
            <person name="Grigoriev I.V."/>
            <person name="Berka R.M."/>
            <person name="Blanchette R.A."/>
            <person name="Kersten P."/>
            <person name="Martinez A.T."/>
            <person name="Vicuna R."/>
            <person name="Cullen D."/>
        </authorList>
    </citation>
    <scope>NUCLEOTIDE SEQUENCE [LARGE SCALE GENOMIC DNA]</scope>
    <source>
        <strain>B</strain>
    </source>
</reference>
<reference key="2">
    <citation type="journal article" date="2017" name="Appl. Environ. Microbiol.">
        <title>A highly conserved basidiomycete peptide synthetase produces a trimeric hydroxamate siderophore.</title>
        <authorList>
            <person name="Brandenburger E."/>
            <person name="Gressler M."/>
            <person name="Leonhardt R."/>
            <person name="Lackner G."/>
            <person name="Habel A."/>
            <person name="Hertweck C."/>
            <person name="Brock M."/>
            <person name="Hoffmeister D."/>
        </authorList>
    </citation>
    <scope>INDUCTION</scope>
    <scope>FUNCTION</scope>
    <source>
        <strain>B</strain>
    </source>
</reference>
<comment type="function">
    <text evidence="3">L-ornithine N(5)-monooxygenase; part of the siderophore basidioferrin biosynthetic pathway (PubMed:28842536). The biosynthesis of basidioferrin depends on the hydroxylation of ornithine to N(5)-hydroxyornithine, catalyzed by the monooxygenase SMO1 (PubMed:28842536). The second step, the acylation of N(5)-hydroxy-L-ornithine is catalyzed by a not yet identified N-acyltransferase (PubMed:22434909). Finally, assembly of basidioferrin is catalyzed by the nonribosomal peptide synthase (NRPS) NPS2 via amide bond formation between three L-AHO molecules to release the linear L-AHO trimer (PubMed:22434909).</text>
</comment>
<comment type="catalytic activity">
    <reaction evidence="1">
        <text>L-ornithine + NADPH + O2 = N(5)-hydroxy-L-ornithine + NADP(+) + H2O</text>
        <dbReference type="Rhea" id="RHEA:41508"/>
        <dbReference type="ChEBI" id="CHEBI:15377"/>
        <dbReference type="ChEBI" id="CHEBI:15379"/>
        <dbReference type="ChEBI" id="CHEBI:46911"/>
        <dbReference type="ChEBI" id="CHEBI:57783"/>
        <dbReference type="ChEBI" id="CHEBI:58349"/>
        <dbReference type="ChEBI" id="CHEBI:78275"/>
        <dbReference type="EC" id="1.14.13.196"/>
    </reaction>
</comment>
<comment type="catalytic activity">
    <reaction evidence="1">
        <text>L-ornithine + NADH + O2 = N(5)-hydroxy-L-ornithine + NAD(+) + H2O</text>
        <dbReference type="Rhea" id="RHEA:41512"/>
        <dbReference type="ChEBI" id="CHEBI:15377"/>
        <dbReference type="ChEBI" id="CHEBI:15379"/>
        <dbReference type="ChEBI" id="CHEBI:46911"/>
        <dbReference type="ChEBI" id="CHEBI:57540"/>
        <dbReference type="ChEBI" id="CHEBI:57945"/>
        <dbReference type="ChEBI" id="CHEBI:78275"/>
        <dbReference type="EC" id="1.14.13.196"/>
    </reaction>
</comment>
<comment type="cofactor">
    <cofactor evidence="1">
        <name>FAD</name>
        <dbReference type="ChEBI" id="CHEBI:57692"/>
    </cofactor>
    <text evidence="1">Binds 1 FAD per subunit.</text>
</comment>
<comment type="pathway">
    <text evidence="6">Siderophore biosynthesis.</text>
</comment>
<comment type="subunit">
    <text evidence="1">Homotetramer.</text>
</comment>
<comment type="induction">
    <text evidence="3">Expression is induced under iron-depleted conditions (PubMed:28842536).</text>
</comment>
<comment type="similarity">
    <text evidence="5">Belongs to the lysine N(6)-hydroxylase/L-ornithine N(5)-oxygenase family.</text>
</comment>
<sequence>MEAQDPLFDLIGLGFGPANLAIAGAIVEKWEGPSAGGDGGISAHKVLFIEKQPEFQWHPGMLLPNTRMQISFLKDLATLRSPQSPLTFLSYLHAEGRLLPFINRGSFTPTRREYFDYLSWAARTVESKGIKVQYGEEVVSIRGSEDNTVEVHSRDVKTGTIVIRRTRNLVISPGGNPKLPPNISLLYPHPRILHSSRYATSVDQLLGTLSPANRPLRIAVIGSGQSAAEVTLDLHSRLSSMPGGDRPHAIDMIFRNGSLKPSDDSPFSNEIFDPDTTEVIYNLPTQSDRENILKEYNNTNYSVVNPRTIDAMYEVMYDQKLDDAIARRKGDKATPSAARITMHPHMTLYFADDLPQLAETDSATETSQEGIRLTLQNVFSQAQSTRDYDAVVCATGYDRTSWLRMLTSSDIGKHFGLNLSSDPVQLVPSTEIPKGPDGSLFDASEEEATWRPASPITPASPSPPSTPTSSALSQSRMLGQLPITKLYITREYCLVPNSPQFKPRIYLQGCTEATHGLSESLLSILGVRAGLVVDDLWKNSQ</sequence>
<keyword id="KW-0274">FAD</keyword>
<keyword id="KW-0285">Flavoprotein</keyword>
<keyword id="KW-0503">Monooxygenase</keyword>
<keyword id="KW-0521">NADP</keyword>
<keyword id="KW-0560">Oxidoreductase</keyword>
<keyword id="KW-1185">Reference proteome</keyword>
<accession>M2PP75</accession>
<name>SIDA_CERS8</name>
<evidence type="ECO:0000250" key="1">
    <source>
        <dbReference type="UniProtKB" id="E9QYP0"/>
    </source>
</evidence>
<evidence type="ECO:0000256" key="2">
    <source>
        <dbReference type="SAM" id="MobiDB-lite"/>
    </source>
</evidence>
<evidence type="ECO:0000269" key="3">
    <source>
    </source>
</evidence>
<evidence type="ECO:0000303" key="4">
    <source>
    </source>
</evidence>
<evidence type="ECO:0000305" key="5"/>
<evidence type="ECO:0000305" key="6">
    <source>
    </source>
</evidence>